<keyword id="KW-0028">Amino-acid biosynthesis</keyword>
<keyword id="KW-0057">Aromatic amino acid biosynthesis</keyword>
<keyword id="KW-0413">Isomerase</keyword>
<keyword id="KW-0822">Tryptophan biosynthesis</keyword>
<protein>
    <recommendedName>
        <fullName evidence="1">N-(5'-phosphoribosyl)anthranilate isomerase</fullName>
        <shortName evidence="1">PRAI</shortName>
        <ecNumber evidence="1">5.3.1.24</ecNumber>
    </recommendedName>
</protein>
<dbReference type="EC" id="5.3.1.24" evidence="1"/>
<dbReference type="EMBL" id="CR628336">
    <property type="protein sequence ID" value="CAH12418.1"/>
    <property type="molecule type" value="Genomic_DNA"/>
</dbReference>
<dbReference type="RefSeq" id="WP_011213614.1">
    <property type="nucleotide sequence ID" value="NC_006368.1"/>
</dbReference>
<dbReference type="SMR" id="Q5X5Q3"/>
<dbReference type="KEGG" id="lpp:lpp1267"/>
<dbReference type="LegioList" id="lpp1267"/>
<dbReference type="HOGENOM" id="CLU_076364_2_0_6"/>
<dbReference type="UniPathway" id="UPA00035">
    <property type="reaction ID" value="UER00042"/>
</dbReference>
<dbReference type="GO" id="GO:0004640">
    <property type="term" value="F:phosphoribosylanthranilate isomerase activity"/>
    <property type="evidence" value="ECO:0007669"/>
    <property type="project" value="UniProtKB-UniRule"/>
</dbReference>
<dbReference type="GO" id="GO:0000162">
    <property type="term" value="P:L-tryptophan biosynthetic process"/>
    <property type="evidence" value="ECO:0007669"/>
    <property type="project" value="UniProtKB-UniRule"/>
</dbReference>
<dbReference type="CDD" id="cd00405">
    <property type="entry name" value="PRAI"/>
    <property type="match status" value="1"/>
</dbReference>
<dbReference type="FunFam" id="3.20.20.70:FF:000075">
    <property type="entry name" value="Tryptophan biosynthesis protein TRP1"/>
    <property type="match status" value="1"/>
</dbReference>
<dbReference type="Gene3D" id="3.20.20.70">
    <property type="entry name" value="Aldolase class I"/>
    <property type="match status" value="1"/>
</dbReference>
<dbReference type="HAMAP" id="MF_00135">
    <property type="entry name" value="PRAI"/>
    <property type="match status" value="1"/>
</dbReference>
<dbReference type="InterPro" id="IPR013785">
    <property type="entry name" value="Aldolase_TIM"/>
</dbReference>
<dbReference type="InterPro" id="IPR001240">
    <property type="entry name" value="PRAI_dom"/>
</dbReference>
<dbReference type="InterPro" id="IPR011060">
    <property type="entry name" value="RibuloseP-bd_barrel"/>
</dbReference>
<dbReference type="InterPro" id="IPR044643">
    <property type="entry name" value="TrpF_fam"/>
</dbReference>
<dbReference type="NCBIfam" id="NF002298">
    <property type="entry name" value="PRK01222.1-4"/>
    <property type="match status" value="1"/>
</dbReference>
<dbReference type="PANTHER" id="PTHR42894">
    <property type="entry name" value="N-(5'-PHOSPHORIBOSYL)ANTHRANILATE ISOMERASE"/>
    <property type="match status" value="1"/>
</dbReference>
<dbReference type="PANTHER" id="PTHR42894:SF1">
    <property type="entry name" value="N-(5'-PHOSPHORIBOSYL)ANTHRANILATE ISOMERASE"/>
    <property type="match status" value="1"/>
</dbReference>
<dbReference type="Pfam" id="PF00697">
    <property type="entry name" value="PRAI"/>
    <property type="match status" value="1"/>
</dbReference>
<dbReference type="SUPFAM" id="SSF51366">
    <property type="entry name" value="Ribulose-phoshate binding barrel"/>
    <property type="match status" value="1"/>
</dbReference>
<feature type="chain" id="PRO_1000018601" description="N-(5'-phosphoribosyl)anthranilate isomerase">
    <location>
        <begin position="1"/>
        <end position="207"/>
    </location>
</feature>
<organism>
    <name type="scientific">Legionella pneumophila (strain Paris)</name>
    <dbReference type="NCBI Taxonomy" id="297246"/>
    <lineage>
        <taxon>Bacteria</taxon>
        <taxon>Pseudomonadati</taxon>
        <taxon>Pseudomonadota</taxon>
        <taxon>Gammaproteobacteria</taxon>
        <taxon>Legionellales</taxon>
        <taxon>Legionellaceae</taxon>
        <taxon>Legionella</taxon>
    </lineage>
</organism>
<accession>Q5X5Q3</accession>
<comment type="catalytic activity">
    <reaction evidence="1">
        <text>N-(5-phospho-beta-D-ribosyl)anthranilate = 1-(2-carboxyphenylamino)-1-deoxy-D-ribulose 5-phosphate</text>
        <dbReference type="Rhea" id="RHEA:21540"/>
        <dbReference type="ChEBI" id="CHEBI:18277"/>
        <dbReference type="ChEBI" id="CHEBI:58613"/>
        <dbReference type="EC" id="5.3.1.24"/>
    </reaction>
</comment>
<comment type="pathway">
    <text evidence="1">Amino-acid biosynthesis; L-tryptophan biosynthesis; L-tryptophan from chorismate: step 3/5.</text>
</comment>
<comment type="similarity">
    <text evidence="1">Belongs to the TrpF family.</text>
</comment>
<sequence length="207" mass="23018">MNPSRIRIKMCGMTRSEDIQYAIDLGVDAIGLIFYPKSARNVSLEKARIIVNNIPPFVDIVAVLVNPEQSFVQLIINEIPVQLLQFHGEESSEFCRQFNKPFIKAIHPKTAIQIQSAVDEFFDASAILLDTPSDKERGGTGLTFDWNIIPENLSKPYILAGGLNESNILEAITMCHPYAVDVCSGIEASPGVKDHLKMSRFIKAIWG</sequence>
<proteinExistence type="inferred from homology"/>
<reference key="1">
    <citation type="journal article" date="2004" name="Nat. Genet.">
        <title>Evidence in the Legionella pneumophila genome for exploitation of host cell functions and high genome plasticity.</title>
        <authorList>
            <person name="Cazalet C."/>
            <person name="Rusniok C."/>
            <person name="Brueggemann H."/>
            <person name="Zidane N."/>
            <person name="Magnier A."/>
            <person name="Ma L."/>
            <person name="Tichit M."/>
            <person name="Jarraud S."/>
            <person name="Bouchier C."/>
            <person name="Vandenesch F."/>
            <person name="Kunst F."/>
            <person name="Etienne J."/>
            <person name="Glaser P."/>
            <person name="Buchrieser C."/>
        </authorList>
    </citation>
    <scope>NUCLEOTIDE SEQUENCE [LARGE SCALE GENOMIC DNA]</scope>
    <source>
        <strain>Paris</strain>
    </source>
</reference>
<gene>
    <name evidence="1" type="primary">trpF</name>
    <name type="ordered locus">lpp1267</name>
</gene>
<evidence type="ECO:0000255" key="1">
    <source>
        <dbReference type="HAMAP-Rule" id="MF_00135"/>
    </source>
</evidence>
<name>TRPF_LEGPA</name>